<reference key="1">
    <citation type="journal article" date="2003" name="Proc. Natl. Acad. Sci. U.S.A.">
        <title>The complete genome sequence of the Arabidopsis and tomato pathogen Pseudomonas syringae pv. tomato DC3000.</title>
        <authorList>
            <person name="Buell C.R."/>
            <person name="Joardar V."/>
            <person name="Lindeberg M."/>
            <person name="Selengut J."/>
            <person name="Paulsen I.T."/>
            <person name="Gwinn M.L."/>
            <person name="Dodson R.J."/>
            <person name="DeBoy R.T."/>
            <person name="Durkin A.S."/>
            <person name="Kolonay J.F."/>
            <person name="Madupu R."/>
            <person name="Daugherty S.C."/>
            <person name="Brinkac L.M."/>
            <person name="Beanan M.J."/>
            <person name="Haft D.H."/>
            <person name="Nelson W.C."/>
            <person name="Davidsen T.M."/>
            <person name="Zafar N."/>
            <person name="Zhou L."/>
            <person name="Liu J."/>
            <person name="Yuan Q."/>
            <person name="Khouri H.M."/>
            <person name="Fedorova N.B."/>
            <person name="Tran B."/>
            <person name="Russell D."/>
            <person name="Berry K.J."/>
            <person name="Utterback T.R."/>
            <person name="Van Aken S.E."/>
            <person name="Feldblyum T.V."/>
            <person name="D'Ascenzo M."/>
            <person name="Deng W.-L."/>
            <person name="Ramos A.R."/>
            <person name="Alfano J.R."/>
            <person name="Cartinhour S."/>
            <person name="Chatterjee A.K."/>
            <person name="Delaney T.P."/>
            <person name="Lazarowitz S.G."/>
            <person name="Martin G.B."/>
            <person name="Schneider D.J."/>
            <person name="Tang X."/>
            <person name="Bender C.L."/>
            <person name="White O."/>
            <person name="Fraser C.M."/>
            <person name="Collmer A."/>
        </authorList>
    </citation>
    <scope>NUCLEOTIDE SEQUENCE [LARGE SCALE GENOMIC DNA]</scope>
    <source>
        <strain>ATCC BAA-871 / DC3000</strain>
    </source>
</reference>
<dbReference type="EC" id="6.3.4.21" evidence="1"/>
<dbReference type="EMBL" id="AE016853">
    <property type="protein sequence ID" value="AAO58349.1"/>
    <property type="molecule type" value="Genomic_DNA"/>
</dbReference>
<dbReference type="RefSeq" id="NP_794654.1">
    <property type="nucleotide sequence ID" value="NC_004578.1"/>
</dbReference>
<dbReference type="RefSeq" id="WP_005763051.1">
    <property type="nucleotide sequence ID" value="NC_004578.1"/>
</dbReference>
<dbReference type="SMR" id="Q87VL5"/>
<dbReference type="STRING" id="223283.PSPTO_4921"/>
<dbReference type="GeneID" id="1186604"/>
<dbReference type="KEGG" id="pst:PSPTO_4921"/>
<dbReference type="PATRIC" id="fig|223283.9.peg.5034"/>
<dbReference type="eggNOG" id="COG1488">
    <property type="taxonomic scope" value="Bacteria"/>
</dbReference>
<dbReference type="HOGENOM" id="CLU_030991_1_0_6"/>
<dbReference type="OrthoDB" id="9771406at2"/>
<dbReference type="PhylomeDB" id="Q87VL5"/>
<dbReference type="UniPathway" id="UPA00253">
    <property type="reaction ID" value="UER00457"/>
</dbReference>
<dbReference type="Proteomes" id="UP000002515">
    <property type="component" value="Chromosome"/>
</dbReference>
<dbReference type="GO" id="GO:0005829">
    <property type="term" value="C:cytosol"/>
    <property type="evidence" value="ECO:0007669"/>
    <property type="project" value="TreeGrafter"/>
</dbReference>
<dbReference type="GO" id="GO:0004516">
    <property type="term" value="F:nicotinate phosphoribosyltransferase activity"/>
    <property type="evidence" value="ECO:0007669"/>
    <property type="project" value="UniProtKB-UniRule"/>
</dbReference>
<dbReference type="GO" id="GO:0034355">
    <property type="term" value="P:NAD biosynthetic process via the salvage pathway"/>
    <property type="evidence" value="ECO:0007669"/>
    <property type="project" value="TreeGrafter"/>
</dbReference>
<dbReference type="CDD" id="cd01401">
    <property type="entry name" value="PncB_like"/>
    <property type="match status" value="1"/>
</dbReference>
<dbReference type="Gene3D" id="3.20.140.10">
    <property type="entry name" value="nicotinate phosphoribosyltransferase"/>
    <property type="match status" value="1"/>
</dbReference>
<dbReference type="HAMAP" id="MF_00570">
    <property type="entry name" value="NAPRTase"/>
    <property type="match status" value="1"/>
</dbReference>
<dbReference type="InterPro" id="IPR041525">
    <property type="entry name" value="N/Namide_PRibTrfase"/>
</dbReference>
<dbReference type="InterPro" id="IPR040727">
    <property type="entry name" value="NAPRTase_N"/>
</dbReference>
<dbReference type="InterPro" id="IPR006406">
    <property type="entry name" value="Nic_PRibTrfase"/>
</dbReference>
<dbReference type="InterPro" id="IPR007229">
    <property type="entry name" value="Nic_PRibTrfase-Fam"/>
</dbReference>
<dbReference type="InterPro" id="IPR036068">
    <property type="entry name" value="Nicotinate_pribotase-like_C"/>
</dbReference>
<dbReference type="NCBIfam" id="TIGR01514">
    <property type="entry name" value="NAPRTase"/>
    <property type="match status" value="1"/>
</dbReference>
<dbReference type="NCBIfam" id="NF003704">
    <property type="entry name" value="PRK05321.1"/>
    <property type="match status" value="1"/>
</dbReference>
<dbReference type="PANTHER" id="PTHR11098">
    <property type="entry name" value="NICOTINATE PHOSPHORIBOSYLTRANSFERASE"/>
    <property type="match status" value="1"/>
</dbReference>
<dbReference type="PANTHER" id="PTHR11098:SF1">
    <property type="entry name" value="NICOTINATE PHOSPHORIBOSYLTRANSFERASE"/>
    <property type="match status" value="1"/>
</dbReference>
<dbReference type="Pfam" id="PF04095">
    <property type="entry name" value="NAPRTase"/>
    <property type="match status" value="1"/>
</dbReference>
<dbReference type="Pfam" id="PF17767">
    <property type="entry name" value="NAPRTase_N"/>
    <property type="match status" value="1"/>
</dbReference>
<dbReference type="PIRSF" id="PIRSF000484">
    <property type="entry name" value="NAPRT"/>
    <property type="match status" value="1"/>
</dbReference>
<dbReference type="SUPFAM" id="SSF51690">
    <property type="entry name" value="Nicotinate/Quinolinate PRTase C-terminal domain-like"/>
    <property type="match status" value="1"/>
</dbReference>
<dbReference type="SUPFAM" id="SSF54675">
    <property type="entry name" value="Nicotinate/Quinolinate PRTase N-terminal domain-like"/>
    <property type="match status" value="1"/>
</dbReference>
<protein>
    <recommendedName>
        <fullName evidence="1">Nicotinate phosphoribosyltransferase</fullName>
        <shortName evidence="1">NAPRTase</shortName>
        <ecNumber evidence="1">6.3.4.21</ecNumber>
    </recommendedName>
</protein>
<keyword id="KW-0436">Ligase</keyword>
<keyword id="KW-0597">Phosphoprotein</keyword>
<keyword id="KW-0662">Pyridine nucleotide biosynthesis</keyword>
<keyword id="KW-1185">Reference proteome</keyword>
<gene>
    <name evidence="1" type="primary">pncB</name>
    <name type="ordered locus">PSPTO_4921</name>
    <name type="ORF">PSPTO4921</name>
</gene>
<organism>
    <name type="scientific">Pseudomonas syringae pv. tomato (strain ATCC BAA-871 / DC3000)</name>
    <dbReference type="NCBI Taxonomy" id="223283"/>
    <lineage>
        <taxon>Bacteria</taxon>
        <taxon>Pseudomonadati</taxon>
        <taxon>Pseudomonadota</taxon>
        <taxon>Gammaproteobacteria</taxon>
        <taxon>Pseudomonadales</taxon>
        <taxon>Pseudomonadaceae</taxon>
        <taxon>Pseudomonas</taxon>
    </lineage>
</organism>
<name>PNCB_PSESM</name>
<evidence type="ECO:0000255" key="1">
    <source>
        <dbReference type="HAMAP-Rule" id="MF_00570"/>
    </source>
</evidence>
<comment type="function">
    <text evidence="1">Catalyzes the synthesis of beta-nicotinate D-ribonucleotide from nicotinate and 5-phospho-D-ribose 1-phosphate at the expense of ATP.</text>
</comment>
<comment type="catalytic activity">
    <reaction evidence="1">
        <text>nicotinate + 5-phospho-alpha-D-ribose 1-diphosphate + ATP + H2O = nicotinate beta-D-ribonucleotide + ADP + phosphate + diphosphate</text>
        <dbReference type="Rhea" id="RHEA:36163"/>
        <dbReference type="ChEBI" id="CHEBI:15377"/>
        <dbReference type="ChEBI" id="CHEBI:30616"/>
        <dbReference type="ChEBI" id="CHEBI:32544"/>
        <dbReference type="ChEBI" id="CHEBI:33019"/>
        <dbReference type="ChEBI" id="CHEBI:43474"/>
        <dbReference type="ChEBI" id="CHEBI:57502"/>
        <dbReference type="ChEBI" id="CHEBI:58017"/>
        <dbReference type="ChEBI" id="CHEBI:456216"/>
        <dbReference type="EC" id="6.3.4.21"/>
    </reaction>
</comment>
<comment type="pathway">
    <text evidence="1">Cofactor biosynthesis; NAD(+) biosynthesis; nicotinate D-ribonucleotide from nicotinate: step 1/1.</text>
</comment>
<comment type="PTM">
    <text evidence="1">Transiently phosphorylated on a His residue during the reaction cycle. Phosphorylation strongly increases the affinity for substrates and increases the rate of nicotinate D-ribonucleotide production. Dephosphorylation regenerates the low-affinity form of the enzyme, leading to product release.</text>
</comment>
<comment type="similarity">
    <text evidence="1">Belongs to the NAPRTase family.</text>
</comment>
<sequence>MSESAFSNRIVQSLLDTDFYKLTMMQAVLHNYPNVDVEWEFRCRNGEDLRPYLGEIQHQIELLCELSLSPEHLVFLERITFMKPDFLRFLGLFRFNTRYVKTSIENDELCIRLHGPWLHVILFEVPLLAIVSEVRNRHRYPDTLLSQARDRLYDKFEWLTVNATPDELAELKVADFGTRRRFSYRVQEEVLNVLKLDFPGQLVGTSNVHLARQLDLKPLGTMAHEWIMAHQQLGPRLIDSQIAALDCWVREYRGLLGIALTDCITTDAFLNDFDLYFAKLFDGLRHDSGDPVKWAEKCISHYQKLGIDPMSKTLVFSDGLNLPKALDIFRALRGRINVSFGIGTNLTADIPGIAPMNMVLKMTACAGQAVAKISDESGKTQCKDPNFVAYLRHVFKVPDLPSPAKPA</sequence>
<accession>Q87VL5</accession>
<proteinExistence type="inferred from homology"/>
<feature type="chain" id="PRO_1000129478" description="Nicotinate phosphoribosyltransferase">
    <location>
        <begin position="1"/>
        <end position="407"/>
    </location>
</feature>
<feature type="modified residue" description="Phosphohistidine; by autocatalysis" evidence="1">
    <location>
        <position position="224"/>
    </location>
</feature>